<dbReference type="EMBL" id="AB233421">
    <property type="protein sequence ID" value="BAE48587.1"/>
    <property type="molecule type" value="mRNA"/>
</dbReference>
<dbReference type="RefSeq" id="NP_001034388.1">
    <property type="nucleotide sequence ID" value="NM_001039299.1"/>
</dbReference>
<dbReference type="SMR" id="Q2Z1W2"/>
<dbReference type="FunCoup" id="Q2Z1W2">
    <property type="interactions" value="529"/>
</dbReference>
<dbReference type="STRING" id="9031.ENSGALP00000031579"/>
<dbReference type="PaxDb" id="9031-ENSGALP00000031579"/>
<dbReference type="GeneID" id="422548"/>
<dbReference type="KEGG" id="gga:422548"/>
<dbReference type="CTD" id="79682"/>
<dbReference type="VEuPathDB" id="HostDB:geneid_422548"/>
<dbReference type="eggNOG" id="ENOG502S1IM">
    <property type="taxonomic scope" value="Eukaryota"/>
</dbReference>
<dbReference type="InParanoid" id="Q2Z1W2"/>
<dbReference type="OrthoDB" id="8959258at2759"/>
<dbReference type="PhylomeDB" id="Q2Z1W2"/>
<dbReference type="PRO" id="PR:Q2Z1W2"/>
<dbReference type="Proteomes" id="UP000000539">
    <property type="component" value="Unassembled WGS sequence"/>
</dbReference>
<dbReference type="GO" id="GO:0000775">
    <property type="term" value="C:chromosome, centromeric region"/>
    <property type="evidence" value="ECO:0007669"/>
    <property type="project" value="UniProtKB-SubCell"/>
</dbReference>
<dbReference type="GO" id="GO:0005634">
    <property type="term" value="C:nucleus"/>
    <property type="evidence" value="ECO:0000318"/>
    <property type="project" value="GO_Central"/>
</dbReference>
<dbReference type="InterPro" id="IPR025214">
    <property type="entry name" value="CENP-U"/>
</dbReference>
<dbReference type="PANTHER" id="PTHR32222">
    <property type="entry name" value="CENTROMERE PROTEIN U"/>
    <property type="match status" value="1"/>
</dbReference>
<dbReference type="PANTHER" id="PTHR32222:SF1">
    <property type="entry name" value="CENTROMERE PROTEIN U"/>
    <property type="match status" value="1"/>
</dbReference>
<dbReference type="Pfam" id="PF13097">
    <property type="entry name" value="CENP-U"/>
    <property type="match status" value="1"/>
</dbReference>
<sequence length="345" mass="39638">MSSKKRTKRNRAGDEYKEHKGRSHPRRKFLPPEEPDVSRISKVAGVNQLEELCDSFDQPLHSTAVDACGEEHSENESSGYVPAPQRTNAERSEKMLLETPEGDVHEFSQSGSVREPLMENLNAPNTTRSEVKKKRPSKKSSSDSSVNSPSSVQLWCPNKLKRSSRDITELDVVLAEFEKIAANYRQSIESKACRKAVSAFCSAFEDQVTDLITEVQELKNTKKKNAKVVADIKKKRQRLMQVREKLSRTEPQLIKLQKEYAEVEERRSSLRQVVQFLTDLKELQQDYLDYREENPRKKVVYGASSLPALLVESRRILQAERHFQNINRKLEYALEVQRGKLAKEH</sequence>
<gene>
    <name type="primary">CENPU</name>
    <name type="synonym">CENP50</name>
    <name type="synonym">MLF1IP</name>
</gene>
<keyword id="KW-0137">Centromere</keyword>
<keyword id="KW-0158">Chromosome</keyword>
<keyword id="KW-0175">Coiled coil</keyword>
<keyword id="KW-0539">Nucleus</keyword>
<keyword id="KW-1185">Reference proteome</keyword>
<protein>
    <recommendedName>
        <fullName>Centromere protein U</fullName>
        <shortName>CENP-U</shortName>
    </recommendedName>
    <alternativeName>
        <fullName>Centromere protein p50</fullName>
    </alternativeName>
    <alternativeName>
        <fullName>MLF1-interacting protein</fullName>
    </alternativeName>
    <alternativeName>
        <fullName>centromere protein of 50 kDa</fullName>
        <shortName>CENP-50</shortName>
    </alternativeName>
</protein>
<accession>Q2Z1W2</accession>
<evidence type="ECO:0000255" key="1"/>
<evidence type="ECO:0000256" key="2">
    <source>
        <dbReference type="SAM" id="MobiDB-lite"/>
    </source>
</evidence>
<evidence type="ECO:0000269" key="3">
    <source>
    </source>
</evidence>
<evidence type="ECO:0000305" key="4"/>
<feature type="chain" id="PRO_0000247675" description="Centromere protein U">
    <location>
        <begin position="1"/>
        <end position="345"/>
    </location>
</feature>
<feature type="region of interest" description="Disordered" evidence="2">
    <location>
        <begin position="1"/>
        <end position="37"/>
    </location>
</feature>
<feature type="region of interest" description="Disordered" evidence="2">
    <location>
        <begin position="64"/>
        <end position="153"/>
    </location>
</feature>
<feature type="coiled-coil region" evidence="1">
    <location>
        <begin position="201"/>
        <end position="294"/>
    </location>
</feature>
<feature type="short sequence motif" description="Nuclear localization signal" evidence="1">
    <location>
        <begin position="222"/>
        <end position="239"/>
    </location>
</feature>
<feature type="compositionally biased region" description="Basic residues" evidence="2">
    <location>
        <begin position="1"/>
        <end position="10"/>
    </location>
</feature>
<feature type="compositionally biased region" description="Basic residues" evidence="2">
    <location>
        <begin position="19"/>
        <end position="29"/>
    </location>
</feature>
<feature type="compositionally biased region" description="Basic and acidic residues" evidence="2">
    <location>
        <begin position="88"/>
        <end position="106"/>
    </location>
</feature>
<feature type="compositionally biased region" description="Low complexity" evidence="2">
    <location>
        <begin position="142"/>
        <end position="152"/>
    </location>
</feature>
<organism>
    <name type="scientific">Gallus gallus</name>
    <name type="common">Chicken</name>
    <dbReference type="NCBI Taxonomy" id="9031"/>
    <lineage>
        <taxon>Eukaryota</taxon>
        <taxon>Metazoa</taxon>
        <taxon>Chordata</taxon>
        <taxon>Craniata</taxon>
        <taxon>Vertebrata</taxon>
        <taxon>Euteleostomi</taxon>
        <taxon>Archelosauria</taxon>
        <taxon>Archosauria</taxon>
        <taxon>Dinosauria</taxon>
        <taxon>Saurischia</taxon>
        <taxon>Theropoda</taxon>
        <taxon>Coelurosauria</taxon>
        <taxon>Aves</taxon>
        <taxon>Neognathae</taxon>
        <taxon>Galloanserae</taxon>
        <taxon>Galliformes</taxon>
        <taxon>Phasianidae</taxon>
        <taxon>Phasianinae</taxon>
        <taxon>Gallus</taxon>
    </lineage>
</organism>
<reference key="1">
    <citation type="journal article" date="2005" name="Mol. Cell. Biol.">
        <title>The constitutive centromere component CENP-50 is required for recovery from spindle damage.</title>
        <authorList>
            <person name="Minoshima Y."/>
            <person name="Hori T."/>
            <person name="Okada M."/>
            <person name="Kimura H."/>
            <person name="Haraguchi T."/>
            <person name="Hiraoka Y."/>
            <person name="Bao Y.-C."/>
            <person name="Kawashima T."/>
            <person name="Kitamura T."/>
            <person name="Fukagawa T."/>
        </authorList>
    </citation>
    <scope>NUCLEOTIDE SEQUENCE [MRNA]</scope>
    <scope>FUNCTION</scope>
    <scope>SUBCELLULAR LOCATION</scope>
    <scope>INTERACTION WITH CENPH-CENPI COMPLEX</scope>
</reference>
<name>CENPU_CHICK</name>
<proteinExistence type="evidence at protein level"/>
<comment type="function">
    <text evidence="3">Probable component of a centromeric complex involved in assembly of kinetochore proteins, mitotic progression and chromosome segregation. Required for maintenance of sister chromatid adhesion during mitotic checkpoint activation.</text>
</comment>
<comment type="subunit">
    <text evidence="3">Interacts with CENPH-CENPI complex at the kinetochore.</text>
</comment>
<comment type="subcellular location">
    <subcellularLocation>
        <location evidence="3">Nucleus</location>
    </subcellularLocation>
    <subcellularLocation>
        <location evidence="3">Chromosome</location>
        <location evidence="3">Centromere</location>
    </subcellularLocation>
    <text>Localizes to the centromeres throughout the cell cycle.</text>
</comment>
<comment type="similarity">
    <text evidence="4">Belongs to the CENP-U/AME1 family.</text>
</comment>